<sequence length="49" mass="5890">MLQLMKQLYEKPAVKWTCHTGFYLMILLVLFFMYGFHTANTGSYIYNDF</sequence>
<comment type="subcellular location">
    <subcellularLocation>
        <location evidence="2">Cell membrane</location>
        <topology evidence="2">Single-pass membrane protein</topology>
    </subcellularLocation>
</comment>
<gene>
    <name type="primary">ywzH</name>
    <name type="ordered locus">BSU38499</name>
</gene>
<proteinExistence type="predicted"/>
<protein>
    <recommendedName>
        <fullName>Uncharacterized membrane protein YwzH</fullName>
    </recommendedName>
</protein>
<feature type="chain" id="PRO_0000382679" description="Uncharacterized membrane protein YwzH">
    <location>
        <begin position="1"/>
        <end position="49"/>
    </location>
</feature>
<feature type="transmembrane region" description="Helical" evidence="1">
    <location>
        <begin position="16"/>
        <end position="36"/>
    </location>
</feature>
<name>YWZH_BACSU</name>
<organism>
    <name type="scientific">Bacillus subtilis (strain 168)</name>
    <dbReference type="NCBI Taxonomy" id="224308"/>
    <lineage>
        <taxon>Bacteria</taxon>
        <taxon>Bacillati</taxon>
        <taxon>Bacillota</taxon>
        <taxon>Bacilli</taxon>
        <taxon>Bacillales</taxon>
        <taxon>Bacillaceae</taxon>
        <taxon>Bacillus</taxon>
    </lineage>
</organism>
<dbReference type="EMBL" id="AL009126">
    <property type="protein sequence ID" value="CAX52708.1"/>
    <property type="molecule type" value="Genomic_DNA"/>
</dbReference>
<dbReference type="RefSeq" id="WP_003227330.1">
    <property type="nucleotide sequence ID" value="NZ_OZ025638.1"/>
</dbReference>
<dbReference type="RefSeq" id="YP_003097795.1">
    <property type="nucleotide sequence ID" value="NC_000964.3"/>
</dbReference>
<dbReference type="SMR" id="C0H3T3"/>
<dbReference type="FunCoup" id="C0H3T3">
    <property type="interactions" value="30"/>
</dbReference>
<dbReference type="STRING" id="224308.BSU38499"/>
<dbReference type="PaxDb" id="224308-BSU38499"/>
<dbReference type="EnsemblBacteria" id="CAX52708">
    <property type="protein sequence ID" value="CAX52708"/>
    <property type="gene ID" value="BSU_38499"/>
</dbReference>
<dbReference type="GeneID" id="8303014"/>
<dbReference type="KEGG" id="bsu:BSU38499"/>
<dbReference type="PATRIC" id="fig|224308.179.peg.4168"/>
<dbReference type="InParanoid" id="C0H3T3"/>
<dbReference type="OrthoDB" id="2921335at2"/>
<dbReference type="BioCyc" id="BSUB:BSU38499-MONOMER"/>
<dbReference type="PRO" id="PR:C0H3T3"/>
<dbReference type="Proteomes" id="UP000001570">
    <property type="component" value="Chromosome"/>
</dbReference>
<dbReference type="GO" id="GO:0005886">
    <property type="term" value="C:plasma membrane"/>
    <property type="evidence" value="ECO:0007669"/>
    <property type="project" value="UniProtKB-SubCell"/>
</dbReference>
<dbReference type="InterPro" id="IPR021008">
    <property type="entry name" value="DltX"/>
</dbReference>
<dbReference type="Pfam" id="PF12459">
    <property type="entry name" value="DltX"/>
    <property type="match status" value="1"/>
</dbReference>
<keyword id="KW-1003">Cell membrane</keyword>
<keyword id="KW-0472">Membrane</keyword>
<keyword id="KW-1185">Reference proteome</keyword>
<keyword id="KW-0812">Transmembrane</keyword>
<keyword id="KW-1133">Transmembrane helix</keyword>
<evidence type="ECO:0000255" key="1"/>
<evidence type="ECO:0000305" key="2"/>
<reference key="1">
    <citation type="journal article" date="1997" name="Nature">
        <title>The complete genome sequence of the Gram-positive bacterium Bacillus subtilis.</title>
        <authorList>
            <person name="Kunst F."/>
            <person name="Ogasawara N."/>
            <person name="Moszer I."/>
            <person name="Albertini A.M."/>
            <person name="Alloni G."/>
            <person name="Azevedo V."/>
            <person name="Bertero M.G."/>
            <person name="Bessieres P."/>
            <person name="Bolotin A."/>
            <person name="Borchert S."/>
            <person name="Borriss R."/>
            <person name="Boursier L."/>
            <person name="Brans A."/>
            <person name="Braun M."/>
            <person name="Brignell S.C."/>
            <person name="Bron S."/>
            <person name="Brouillet S."/>
            <person name="Bruschi C.V."/>
            <person name="Caldwell B."/>
            <person name="Capuano V."/>
            <person name="Carter N.M."/>
            <person name="Choi S.-K."/>
            <person name="Codani J.-J."/>
            <person name="Connerton I.F."/>
            <person name="Cummings N.J."/>
            <person name="Daniel R.A."/>
            <person name="Denizot F."/>
            <person name="Devine K.M."/>
            <person name="Duesterhoeft A."/>
            <person name="Ehrlich S.D."/>
            <person name="Emmerson P.T."/>
            <person name="Entian K.-D."/>
            <person name="Errington J."/>
            <person name="Fabret C."/>
            <person name="Ferrari E."/>
            <person name="Foulger D."/>
            <person name="Fritz C."/>
            <person name="Fujita M."/>
            <person name="Fujita Y."/>
            <person name="Fuma S."/>
            <person name="Galizzi A."/>
            <person name="Galleron N."/>
            <person name="Ghim S.-Y."/>
            <person name="Glaser P."/>
            <person name="Goffeau A."/>
            <person name="Golightly E.J."/>
            <person name="Grandi G."/>
            <person name="Guiseppi G."/>
            <person name="Guy B.J."/>
            <person name="Haga K."/>
            <person name="Haiech J."/>
            <person name="Harwood C.R."/>
            <person name="Henaut A."/>
            <person name="Hilbert H."/>
            <person name="Holsappel S."/>
            <person name="Hosono S."/>
            <person name="Hullo M.-F."/>
            <person name="Itaya M."/>
            <person name="Jones L.-M."/>
            <person name="Joris B."/>
            <person name="Karamata D."/>
            <person name="Kasahara Y."/>
            <person name="Klaerr-Blanchard M."/>
            <person name="Klein C."/>
            <person name="Kobayashi Y."/>
            <person name="Koetter P."/>
            <person name="Koningstein G."/>
            <person name="Krogh S."/>
            <person name="Kumano M."/>
            <person name="Kurita K."/>
            <person name="Lapidus A."/>
            <person name="Lardinois S."/>
            <person name="Lauber J."/>
            <person name="Lazarevic V."/>
            <person name="Lee S.-M."/>
            <person name="Levine A."/>
            <person name="Liu H."/>
            <person name="Masuda S."/>
            <person name="Mauel C."/>
            <person name="Medigue C."/>
            <person name="Medina N."/>
            <person name="Mellado R.P."/>
            <person name="Mizuno M."/>
            <person name="Moestl D."/>
            <person name="Nakai S."/>
            <person name="Noback M."/>
            <person name="Noone D."/>
            <person name="O'Reilly M."/>
            <person name="Ogawa K."/>
            <person name="Ogiwara A."/>
            <person name="Oudega B."/>
            <person name="Park S.-H."/>
            <person name="Parro V."/>
            <person name="Pohl T.M."/>
            <person name="Portetelle D."/>
            <person name="Porwollik S."/>
            <person name="Prescott A.M."/>
            <person name="Presecan E."/>
            <person name="Pujic P."/>
            <person name="Purnelle B."/>
            <person name="Rapoport G."/>
            <person name="Rey M."/>
            <person name="Reynolds S."/>
            <person name="Rieger M."/>
            <person name="Rivolta C."/>
            <person name="Rocha E."/>
            <person name="Roche B."/>
            <person name="Rose M."/>
            <person name="Sadaie Y."/>
            <person name="Sato T."/>
            <person name="Scanlan E."/>
            <person name="Schleich S."/>
            <person name="Schroeter R."/>
            <person name="Scoffone F."/>
            <person name="Sekiguchi J."/>
            <person name="Sekowska A."/>
            <person name="Seror S.J."/>
            <person name="Serror P."/>
            <person name="Shin B.-S."/>
            <person name="Soldo B."/>
            <person name="Sorokin A."/>
            <person name="Tacconi E."/>
            <person name="Takagi T."/>
            <person name="Takahashi H."/>
            <person name="Takemaru K."/>
            <person name="Takeuchi M."/>
            <person name="Tamakoshi A."/>
            <person name="Tanaka T."/>
            <person name="Terpstra P."/>
            <person name="Tognoni A."/>
            <person name="Tosato V."/>
            <person name="Uchiyama S."/>
            <person name="Vandenbol M."/>
            <person name="Vannier F."/>
            <person name="Vassarotti A."/>
            <person name="Viari A."/>
            <person name="Wambutt R."/>
            <person name="Wedler E."/>
            <person name="Wedler H."/>
            <person name="Weitzenegger T."/>
            <person name="Winters P."/>
            <person name="Wipat A."/>
            <person name="Yamamoto H."/>
            <person name="Yamane K."/>
            <person name="Yasumoto K."/>
            <person name="Yata K."/>
            <person name="Yoshida K."/>
            <person name="Yoshikawa H.-F."/>
            <person name="Zumstein E."/>
            <person name="Yoshikawa H."/>
            <person name="Danchin A."/>
        </authorList>
    </citation>
    <scope>NUCLEOTIDE SEQUENCE [LARGE SCALE GENOMIC DNA]</scope>
    <source>
        <strain>168</strain>
    </source>
</reference>
<accession>C0H3T3</accession>